<feature type="chain" id="PRO_0000311325" description="Arginine-fifty homeobox">
    <location>
        <begin position="1"/>
        <end position="315"/>
    </location>
</feature>
<feature type="DNA-binding region" description="Homeobox" evidence="1">
    <location>
        <begin position="78"/>
        <end position="137"/>
    </location>
</feature>
<feature type="region of interest" description="Disordered" evidence="2">
    <location>
        <begin position="135"/>
        <end position="163"/>
    </location>
</feature>
<feature type="compositionally biased region" description="Low complexity" evidence="2">
    <location>
        <begin position="136"/>
        <end position="147"/>
    </location>
</feature>
<feature type="compositionally biased region" description="Polar residues" evidence="2">
    <location>
        <begin position="154"/>
        <end position="163"/>
    </location>
</feature>
<feature type="sequence variant" id="VAR_037226" description="In dbSNP:rs9813391.">
    <original>R</original>
    <variation>Q</variation>
    <location>
        <position position="145"/>
    </location>
</feature>
<feature type="sequence conflict" description="In Ref. 1; LN901400." evidence="5" ref="1">
    <original>D</original>
    <variation>G</variation>
    <location>
        <position position="30"/>
    </location>
</feature>
<gene>
    <name evidence="6" type="primary">ARGFX</name>
</gene>
<name>ARGFX_HUMAN</name>
<evidence type="ECO:0000255" key="1">
    <source>
        <dbReference type="PROSITE-ProRule" id="PRU00108"/>
    </source>
</evidence>
<evidence type="ECO:0000256" key="2">
    <source>
        <dbReference type="SAM" id="MobiDB-lite"/>
    </source>
</evidence>
<evidence type="ECO:0000269" key="3">
    <source>
    </source>
</evidence>
<evidence type="ECO:0000269" key="4">
    <source>
    </source>
</evidence>
<evidence type="ECO:0000305" key="5"/>
<evidence type="ECO:0000312" key="6">
    <source>
        <dbReference type="HGNC" id="HGNC:30146"/>
    </source>
</evidence>
<accession>A6NJG6</accession>
<sequence length="315" mass="35617">MRNRMAPENPQPDPFINRNYSNMKVIPPQDPASPSFTLLSKLECSGTVSAYCSLNLPGSTDPPTSASRVAATTAIRRRHKERTSFTHQQYEELEALFSQTMFPDRNLQEKLALRLDLPESTVKVWFRNRRFKLKKQQQQQSAKQRNQILPSKKNVPTSPRTSPSPYAFSPVISDFYSSLPSQPLDPSNWAWNSTFTESSTSDFQMQDTQWERLVASVPALYSDAYDIFQIIELYNLPDENEISSSSFHCLYQYLSPTKYQVGGQGSSLSIFAGPAVGLSPAQTWPNMTSQAFEAYSLTDSLEFQKTSNMVDLGFL</sequence>
<organism>
    <name type="scientific">Homo sapiens</name>
    <name type="common">Human</name>
    <dbReference type="NCBI Taxonomy" id="9606"/>
    <lineage>
        <taxon>Eukaryota</taxon>
        <taxon>Metazoa</taxon>
        <taxon>Chordata</taxon>
        <taxon>Craniata</taxon>
        <taxon>Vertebrata</taxon>
        <taxon>Euteleostomi</taxon>
        <taxon>Mammalia</taxon>
        <taxon>Eutheria</taxon>
        <taxon>Euarchontoglires</taxon>
        <taxon>Primates</taxon>
        <taxon>Haplorrhini</taxon>
        <taxon>Catarrhini</taxon>
        <taxon>Hominidae</taxon>
        <taxon>Homo</taxon>
    </lineage>
</organism>
<keyword id="KW-0010">Activator</keyword>
<keyword id="KW-0238">DNA-binding</keyword>
<keyword id="KW-0371">Homeobox</keyword>
<keyword id="KW-0539">Nucleus</keyword>
<keyword id="KW-1185">Reference proteome</keyword>
<keyword id="KW-0804">Transcription</keyword>
<keyword id="KW-0805">Transcription regulation</keyword>
<protein>
    <recommendedName>
        <fullName evidence="5">Arginine-fifty homeobox</fullName>
    </recommendedName>
</protein>
<proteinExistence type="evidence at transcript level"/>
<comment type="function">
    <text evidence="4">Transcription factor that acts as activator.</text>
</comment>
<comment type="subcellular location">
    <subcellularLocation>
        <location evidence="1">Nucleus</location>
    </subcellularLocation>
</comment>
<comment type="tissue specificity">
    <text evidence="3">Expressed at low level in testis and undifferentiated embryonic stem cells.</text>
</comment>
<comment type="developmental stage">
    <text evidence="4">Expressed in single blastomeres from 8-cell stage embryos.</text>
</comment>
<comment type="similarity">
    <text evidence="5">Belongs to the paired homeobox family.</text>
</comment>
<reference key="1">
    <citation type="journal article" date="2016" name="Sci. Rep.">
        <title>Characterization and target genes of nine human PRD-like homeobox domain genes expressed exclusively in early embryos.</title>
        <authorList>
            <person name="Madissoon E."/>
            <person name="Jouhilahti E.M."/>
            <person name="Vesterlund L."/>
            <person name="Toehoenen V."/>
            <person name="Krjutskov K."/>
            <person name="Petropoulos S."/>
            <person name="Einarsdottir E."/>
            <person name="Linnarsson S."/>
            <person name="Lanner F."/>
            <person name="Maansson R."/>
            <person name="Hovatta O."/>
            <person name="Buerglin T.R."/>
            <person name="Katayama S."/>
            <person name="Kere J."/>
        </authorList>
    </citation>
    <scope>NUCLEOTIDE SEQUENCE [MRNA]</scope>
    <scope>FUNCTION</scope>
    <scope>DEVELOPMENTAL STAGE</scope>
</reference>
<reference key="2">
    <citation type="journal article" date="2006" name="Nature">
        <title>The DNA sequence, annotation and analysis of human chromosome 3.</title>
        <authorList>
            <person name="Muzny D.M."/>
            <person name="Scherer S.E."/>
            <person name="Kaul R."/>
            <person name="Wang J."/>
            <person name="Yu J."/>
            <person name="Sudbrak R."/>
            <person name="Buhay C.J."/>
            <person name="Chen R."/>
            <person name="Cree A."/>
            <person name="Ding Y."/>
            <person name="Dugan-Rocha S."/>
            <person name="Gill R."/>
            <person name="Gunaratne P."/>
            <person name="Harris R.A."/>
            <person name="Hawes A.C."/>
            <person name="Hernandez J."/>
            <person name="Hodgson A.V."/>
            <person name="Hume J."/>
            <person name="Jackson A."/>
            <person name="Khan Z.M."/>
            <person name="Kovar-Smith C."/>
            <person name="Lewis L.R."/>
            <person name="Lozado R.J."/>
            <person name="Metzker M.L."/>
            <person name="Milosavljevic A."/>
            <person name="Miner G.R."/>
            <person name="Morgan M.B."/>
            <person name="Nazareth L.V."/>
            <person name="Scott G."/>
            <person name="Sodergren E."/>
            <person name="Song X.-Z."/>
            <person name="Steffen D."/>
            <person name="Wei S."/>
            <person name="Wheeler D.A."/>
            <person name="Wright M.W."/>
            <person name="Worley K.C."/>
            <person name="Yuan Y."/>
            <person name="Zhang Z."/>
            <person name="Adams C.Q."/>
            <person name="Ansari-Lari M.A."/>
            <person name="Ayele M."/>
            <person name="Brown M.J."/>
            <person name="Chen G."/>
            <person name="Chen Z."/>
            <person name="Clendenning J."/>
            <person name="Clerc-Blankenburg K.P."/>
            <person name="Chen R."/>
            <person name="Chen Z."/>
            <person name="Davis C."/>
            <person name="Delgado O."/>
            <person name="Dinh H.H."/>
            <person name="Dong W."/>
            <person name="Draper H."/>
            <person name="Ernst S."/>
            <person name="Fu G."/>
            <person name="Gonzalez-Garay M.L."/>
            <person name="Garcia D.K."/>
            <person name="Gillett W."/>
            <person name="Gu J."/>
            <person name="Hao B."/>
            <person name="Haugen E."/>
            <person name="Havlak P."/>
            <person name="He X."/>
            <person name="Hennig S."/>
            <person name="Hu S."/>
            <person name="Huang W."/>
            <person name="Jackson L.R."/>
            <person name="Jacob L.S."/>
            <person name="Kelly S.H."/>
            <person name="Kube M."/>
            <person name="Levy R."/>
            <person name="Li Z."/>
            <person name="Liu B."/>
            <person name="Liu J."/>
            <person name="Liu W."/>
            <person name="Lu J."/>
            <person name="Maheshwari M."/>
            <person name="Nguyen B.-V."/>
            <person name="Okwuonu G.O."/>
            <person name="Palmeiri A."/>
            <person name="Pasternak S."/>
            <person name="Perez L.M."/>
            <person name="Phelps K.A."/>
            <person name="Plopper F.J."/>
            <person name="Qiang B."/>
            <person name="Raymond C."/>
            <person name="Rodriguez R."/>
            <person name="Saenphimmachak C."/>
            <person name="Santibanez J."/>
            <person name="Shen H."/>
            <person name="Shen Y."/>
            <person name="Subramanian S."/>
            <person name="Tabor P.E."/>
            <person name="Verduzco D."/>
            <person name="Waldron L."/>
            <person name="Wang J."/>
            <person name="Wang J."/>
            <person name="Wang Q."/>
            <person name="Williams G.A."/>
            <person name="Wong G.K.-S."/>
            <person name="Yao Z."/>
            <person name="Zhang J."/>
            <person name="Zhang X."/>
            <person name="Zhao G."/>
            <person name="Zhou J."/>
            <person name="Zhou Y."/>
            <person name="Nelson D."/>
            <person name="Lehrach H."/>
            <person name="Reinhardt R."/>
            <person name="Naylor S.L."/>
            <person name="Yang H."/>
            <person name="Olson M."/>
            <person name="Weinstock G."/>
            <person name="Gibbs R.A."/>
        </authorList>
    </citation>
    <scope>NUCLEOTIDE SEQUENCE [LARGE SCALE GENOMIC DNA]</scope>
</reference>
<reference key="3">
    <citation type="journal article" date="2007" name="Gene">
        <title>Annotation, nomenclature and evolution of four novel homeobox genes expressed in the human germ line.</title>
        <authorList>
            <person name="Booth H.A."/>
            <person name="Holland P.W.H."/>
        </authorList>
    </citation>
    <scope>IDENTIFICATION</scope>
    <scope>TISSUE SPECIFICITY</scope>
</reference>
<dbReference type="EMBL" id="LN901400">
    <property type="status" value="NOT_ANNOTATED_CDS"/>
    <property type="molecule type" value="mRNA"/>
</dbReference>
<dbReference type="EMBL" id="AC069239">
    <property type="status" value="NOT_ANNOTATED_CDS"/>
    <property type="molecule type" value="Genomic_DNA"/>
</dbReference>
<dbReference type="CCDS" id="CCDS33834.1"/>
<dbReference type="RefSeq" id="NP_001012677.1">
    <property type="nucleotide sequence ID" value="NM_001012659.2"/>
</dbReference>
<dbReference type="SMR" id="A6NJG6"/>
<dbReference type="BioGRID" id="139015">
    <property type="interactions" value="8"/>
</dbReference>
<dbReference type="FunCoup" id="A6NJG6">
    <property type="interactions" value="58"/>
</dbReference>
<dbReference type="STRING" id="9606.ENSP00000335578"/>
<dbReference type="iPTMnet" id="A6NJG6"/>
<dbReference type="PhosphoSitePlus" id="A6NJG6"/>
<dbReference type="BioMuta" id="ARGFX"/>
<dbReference type="PaxDb" id="9606-ENSP00000335578"/>
<dbReference type="TopDownProteomics" id="A6NJG6"/>
<dbReference type="Antibodypedia" id="32829">
    <property type="antibodies" value="106 antibodies from 17 providers"/>
</dbReference>
<dbReference type="DNASU" id="503582"/>
<dbReference type="Ensembl" id="ENST00000334384.5">
    <property type="protein sequence ID" value="ENSP00000335578.3"/>
    <property type="gene ID" value="ENSG00000186103.5"/>
</dbReference>
<dbReference type="Ensembl" id="ENST00000651603.1">
    <property type="protein sequence ID" value="ENSP00000498601.1"/>
    <property type="gene ID" value="ENSG00000186103.5"/>
</dbReference>
<dbReference type="GeneID" id="503582"/>
<dbReference type="KEGG" id="hsa:503582"/>
<dbReference type="MANE-Select" id="ENST00000334384.5">
    <property type="protein sequence ID" value="ENSP00000335578.3"/>
    <property type="RefSeq nucleotide sequence ID" value="NM_001012659.2"/>
    <property type="RefSeq protein sequence ID" value="NP_001012677.1"/>
</dbReference>
<dbReference type="UCSC" id="uc062myc.1">
    <property type="organism name" value="human"/>
</dbReference>
<dbReference type="AGR" id="HGNC:30146"/>
<dbReference type="CTD" id="503582"/>
<dbReference type="DisGeNET" id="503582"/>
<dbReference type="GeneCards" id="ARGFX"/>
<dbReference type="HGNC" id="HGNC:30146">
    <property type="gene designation" value="ARGFX"/>
</dbReference>
<dbReference type="HPA" id="ENSG00000186103">
    <property type="expression patterns" value="Tissue enhanced (bone)"/>
</dbReference>
<dbReference type="MIM" id="611164">
    <property type="type" value="gene"/>
</dbReference>
<dbReference type="neXtProt" id="NX_A6NJG6"/>
<dbReference type="OpenTargets" id="ENSG00000186103"/>
<dbReference type="PharmGKB" id="PA142672588"/>
<dbReference type="VEuPathDB" id="HostDB:ENSG00000186103"/>
<dbReference type="eggNOG" id="KOG2251">
    <property type="taxonomic scope" value="Eukaryota"/>
</dbReference>
<dbReference type="GeneTree" id="ENSGT00730000111572"/>
<dbReference type="HOGENOM" id="CLU_077853_0_0_1"/>
<dbReference type="InParanoid" id="A6NJG6"/>
<dbReference type="OMA" id="NRMAPGN"/>
<dbReference type="OrthoDB" id="6159439at2759"/>
<dbReference type="PAN-GO" id="A6NJG6">
    <property type="GO annotations" value="4 GO annotations based on evolutionary models"/>
</dbReference>
<dbReference type="PhylomeDB" id="A6NJG6"/>
<dbReference type="TreeFam" id="TF351179"/>
<dbReference type="PathwayCommons" id="A6NJG6"/>
<dbReference type="SignaLink" id="A6NJG6"/>
<dbReference type="BioGRID-ORCS" id="503582">
    <property type="hits" value="285 hits in 1135 CRISPR screens"/>
</dbReference>
<dbReference type="GenomeRNAi" id="503582"/>
<dbReference type="Pharos" id="A6NJG6">
    <property type="development level" value="Tdark"/>
</dbReference>
<dbReference type="PRO" id="PR:A6NJG6"/>
<dbReference type="Proteomes" id="UP000005640">
    <property type="component" value="Chromosome 3"/>
</dbReference>
<dbReference type="RNAct" id="A6NJG6">
    <property type="molecule type" value="protein"/>
</dbReference>
<dbReference type="Bgee" id="ENSG00000186103">
    <property type="expression patterns" value="Expressed in mucosa of large intestine and 2 other cell types or tissues"/>
</dbReference>
<dbReference type="GO" id="GO:0000785">
    <property type="term" value="C:chromatin"/>
    <property type="evidence" value="ECO:0000247"/>
    <property type="project" value="NTNU_SB"/>
</dbReference>
<dbReference type="GO" id="GO:0005634">
    <property type="term" value="C:nucleus"/>
    <property type="evidence" value="ECO:0000318"/>
    <property type="project" value="GO_Central"/>
</dbReference>
<dbReference type="GO" id="GO:0000981">
    <property type="term" value="F:DNA-binding transcription factor activity, RNA polymerase II-specific"/>
    <property type="evidence" value="ECO:0000247"/>
    <property type="project" value="NTNU_SB"/>
</dbReference>
<dbReference type="GO" id="GO:0000978">
    <property type="term" value="F:RNA polymerase II cis-regulatory region sequence-specific DNA binding"/>
    <property type="evidence" value="ECO:0000318"/>
    <property type="project" value="GO_Central"/>
</dbReference>
<dbReference type="GO" id="GO:1990837">
    <property type="term" value="F:sequence-specific double-stranded DNA binding"/>
    <property type="evidence" value="ECO:0000314"/>
    <property type="project" value="ARUK-UCL"/>
</dbReference>
<dbReference type="GO" id="GO:0006357">
    <property type="term" value="P:regulation of transcription by RNA polymerase II"/>
    <property type="evidence" value="ECO:0000318"/>
    <property type="project" value="GO_Central"/>
</dbReference>
<dbReference type="CDD" id="cd00086">
    <property type="entry name" value="homeodomain"/>
    <property type="match status" value="1"/>
</dbReference>
<dbReference type="FunFam" id="1.10.10.60:FF:000739">
    <property type="entry name" value="Arginine-fifty homeobox"/>
    <property type="match status" value="1"/>
</dbReference>
<dbReference type="Gene3D" id="1.10.10.60">
    <property type="entry name" value="Homeodomain-like"/>
    <property type="match status" value="1"/>
</dbReference>
<dbReference type="InterPro" id="IPR001356">
    <property type="entry name" value="HD"/>
</dbReference>
<dbReference type="InterPro" id="IPR017970">
    <property type="entry name" value="Homeobox_CS"/>
</dbReference>
<dbReference type="InterPro" id="IPR009057">
    <property type="entry name" value="Homeodomain-like_sf"/>
</dbReference>
<dbReference type="PANTHER" id="PTHR45793:SF16">
    <property type="entry name" value="ARGININE-FIFTY HOMEOBOX"/>
    <property type="match status" value="1"/>
</dbReference>
<dbReference type="PANTHER" id="PTHR45793">
    <property type="entry name" value="HOMEOBOX PROTEIN"/>
    <property type="match status" value="1"/>
</dbReference>
<dbReference type="Pfam" id="PF00046">
    <property type="entry name" value="Homeodomain"/>
    <property type="match status" value="1"/>
</dbReference>
<dbReference type="SMART" id="SM00389">
    <property type="entry name" value="HOX"/>
    <property type="match status" value="1"/>
</dbReference>
<dbReference type="SUPFAM" id="SSF46689">
    <property type="entry name" value="Homeodomain-like"/>
    <property type="match status" value="1"/>
</dbReference>
<dbReference type="PROSITE" id="PS00027">
    <property type="entry name" value="HOMEOBOX_1"/>
    <property type="match status" value="1"/>
</dbReference>
<dbReference type="PROSITE" id="PS50071">
    <property type="entry name" value="HOMEOBOX_2"/>
    <property type="match status" value="1"/>
</dbReference>